<evidence type="ECO:0000256" key="1">
    <source>
        <dbReference type="SAM" id="MobiDB-lite"/>
    </source>
</evidence>
<evidence type="ECO:0000305" key="2"/>
<sequence>MNKNELVSAVAEKAGLTKSDAASAVDAVFDVVQAELKNKGDIRLAGFGSFTVSHRAATKGRNPSTGAEVDIPARNVPKFTPGKGLKDAVNG</sequence>
<protein>
    <recommendedName>
        <fullName>DNA-binding protein HRL53</fullName>
    </recommendedName>
    <alternativeName>
        <fullName>HU-like protein</fullName>
    </alternativeName>
    <alternativeName>
        <fullName>Px</fullName>
    </alternativeName>
</protein>
<reference key="1">
    <citation type="journal article" date="1985" name="Eur. J. Biochem.">
        <title>Characterization and primary structures of DNA-binding HU-type proteins from Rhizobiaceae.</title>
        <authorList>
            <person name="Khanaka H."/>
            <person name="Laine B."/>
            <person name="Sautiere P."/>
            <person name="Guillaume J."/>
        </authorList>
    </citation>
    <scope>PROTEIN SEQUENCE</scope>
    <source>
        <strain>L53</strain>
    </source>
</reference>
<reference key="2">
    <citation type="journal article" date="1998" name="J. Biol. Chem.">
        <title>A HU-like protein binds to specific sites within nod promoters of Rhizobium leguminosarum.</title>
        <authorList>
            <person name="Liu S.T."/>
            <person name="Chang W.Z."/>
            <person name="Cao H.M."/>
            <person name="Hu H.L."/>
            <person name="Chen Z.H."/>
            <person name="Ni F.D."/>
            <person name="Lu H.F."/>
            <person name="Hong G.F."/>
        </authorList>
    </citation>
    <scope>NUCLEOTIDE SEQUENCE [GENOMIC DNA]</scope>
    <scope>PARTIAL PROTEIN SEQUENCE</scope>
    <source>
        <strain>8401</strain>
    </source>
</reference>
<accession>P02348</accession>
<name>DBH5_RHILE</name>
<proteinExistence type="evidence at protein level"/>
<feature type="chain" id="PRO_0000104959" description="DNA-binding protein HRL53">
    <location>
        <begin position="1"/>
        <end position="91"/>
    </location>
</feature>
<feature type="region of interest" description="Disordered" evidence="1">
    <location>
        <begin position="57"/>
        <end position="91"/>
    </location>
</feature>
<keyword id="KW-0903">Direct protein sequencing</keyword>
<keyword id="KW-0226">DNA condensation</keyword>
<keyword id="KW-0238">DNA-binding</keyword>
<dbReference type="EMBL" id="AF090448">
    <property type="protein sequence ID" value="AAC62499.1"/>
    <property type="molecule type" value="Genomic_DNA"/>
</dbReference>
<dbReference type="PIR" id="A02692">
    <property type="entry name" value="DNZRH3"/>
</dbReference>
<dbReference type="RefSeq" id="WP_003558438.1">
    <property type="nucleotide sequence ID" value="NZ_WXXP01000014.1"/>
</dbReference>
<dbReference type="SMR" id="P02348"/>
<dbReference type="GeneID" id="84669392"/>
<dbReference type="eggNOG" id="COG0776">
    <property type="taxonomic scope" value="Bacteria"/>
</dbReference>
<dbReference type="GO" id="GO:0003677">
    <property type="term" value="F:DNA binding"/>
    <property type="evidence" value="ECO:0007669"/>
    <property type="project" value="UniProtKB-KW"/>
</dbReference>
<dbReference type="GO" id="GO:0030527">
    <property type="term" value="F:structural constituent of chromatin"/>
    <property type="evidence" value="ECO:0007669"/>
    <property type="project" value="InterPro"/>
</dbReference>
<dbReference type="GO" id="GO:0030261">
    <property type="term" value="P:chromosome condensation"/>
    <property type="evidence" value="ECO:0007669"/>
    <property type="project" value="UniProtKB-KW"/>
</dbReference>
<dbReference type="CDD" id="cd13831">
    <property type="entry name" value="HU"/>
    <property type="match status" value="1"/>
</dbReference>
<dbReference type="Gene3D" id="4.10.520.10">
    <property type="entry name" value="IHF-like DNA-binding proteins"/>
    <property type="match status" value="1"/>
</dbReference>
<dbReference type="InterPro" id="IPR000119">
    <property type="entry name" value="Hist_DNA-bd"/>
</dbReference>
<dbReference type="InterPro" id="IPR020816">
    <property type="entry name" value="Histone-like_DNA-bd_CS"/>
</dbReference>
<dbReference type="InterPro" id="IPR010992">
    <property type="entry name" value="IHF-like_DNA-bd_dom_sf"/>
</dbReference>
<dbReference type="PANTHER" id="PTHR33175">
    <property type="entry name" value="DNA-BINDING PROTEIN HU"/>
    <property type="match status" value="1"/>
</dbReference>
<dbReference type="PANTHER" id="PTHR33175:SF3">
    <property type="entry name" value="DNA-BINDING PROTEIN HU-BETA"/>
    <property type="match status" value="1"/>
</dbReference>
<dbReference type="Pfam" id="PF00216">
    <property type="entry name" value="Bac_DNA_binding"/>
    <property type="match status" value="1"/>
</dbReference>
<dbReference type="PRINTS" id="PR01727">
    <property type="entry name" value="DNABINDINGHU"/>
</dbReference>
<dbReference type="SMART" id="SM00411">
    <property type="entry name" value="BHL"/>
    <property type="match status" value="1"/>
</dbReference>
<dbReference type="SUPFAM" id="SSF47729">
    <property type="entry name" value="IHF-like DNA-binding proteins"/>
    <property type="match status" value="1"/>
</dbReference>
<dbReference type="PROSITE" id="PS00045">
    <property type="entry name" value="HISTONE_LIKE"/>
    <property type="match status" value="1"/>
</dbReference>
<comment type="function">
    <text>Histone-like DNA-binding protein which is capable of wrapping DNA to stabilize it, and thus to prevent its denaturation under extreme environmental conditions. Binds to nod promoters and induces DNA binding.</text>
</comment>
<comment type="similarity">
    <text evidence="2">Belongs to the bacterial histone-like protein family.</text>
</comment>
<organism>
    <name type="scientific">Rhizobium leguminosarum</name>
    <dbReference type="NCBI Taxonomy" id="384"/>
    <lineage>
        <taxon>Bacteria</taxon>
        <taxon>Pseudomonadati</taxon>
        <taxon>Pseudomonadota</taxon>
        <taxon>Alphaproteobacteria</taxon>
        <taxon>Hyphomicrobiales</taxon>
        <taxon>Rhizobiaceae</taxon>
        <taxon>Rhizobium/Agrobacterium group</taxon>
        <taxon>Rhizobium</taxon>
    </lineage>
</organism>